<keyword id="KW-0027">Amidation</keyword>
<keyword id="KW-0165">Cleavage on pair of basic residues</keyword>
<keyword id="KW-0372">Hormone</keyword>
<keyword id="KW-0873">Pyrrolidone carboxylic acid</keyword>
<keyword id="KW-0964">Secreted</keyword>
<keyword id="KW-0732">Signal</keyword>
<proteinExistence type="inferred from homology"/>
<gene>
    <name type="primary">GNRH1</name>
    <name type="synonym">GNRH</name>
</gene>
<accession>Q95335</accession>
<organism>
    <name type="scientific">Tupaia belangeri</name>
    <name type="common">Common tree shrew</name>
    <name type="synonym">Tupaia glis belangeri</name>
    <dbReference type="NCBI Taxonomy" id="37347"/>
    <lineage>
        <taxon>Eukaryota</taxon>
        <taxon>Metazoa</taxon>
        <taxon>Chordata</taxon>
        <taxon>Craniata</taxon>
        <taxon>Vertebrata</taxon>
        <taxon>Euteleostomi</taxon>
        <taxon>Mammalia</taxon>
        <taxon>Eutheria</taxon>
        <taxon>Euarchontoglires</taxon>
        <taxon>Scandentia</taxon>
        <taxon>Tupaiidae</taxon>
        <taxon>Tupaia</taxon>
    </lineage>
</organism>
<sequence length="92" mass="10197">MELVPKFLAGLILLTLCVGGCYAQHWSYGLRPGGKRNAENLIDSFQEIAKEADQLAEPQHFECTISQPRSPLRALKGALESLIEEETGQKKI</sequence>
<comment type="function">
    <text>Stimulates the secretion of gonadotropins; it stimulates the secretion of both luteinizing and follicle-stimulating hormones.</text>
</comment>
<comment type="subcellular location">
    <subcellularLocation>
        <location>Secreted</location>
    </subcellularLocation>
</comment>
<comment type="similarity">
    <text evidence="3">Belongs to the GnRH family.</text>
</comment>
<reference key="1">
    <citation type="journal article" date="1996" name="Gen. Comp. Endocrinol.">
        <title>Characterization of two new preproGnRH mRNAs in the tree shrew: first direct evidence for mesencephalic GnRH gene expression in a placental mammal.</title>
        <authorList>
            <person name="Kasten T.L."/>
            <person name="White S.A."/>
            <person name="Norton T.T."/>
            <person name="Bond C.T."/>
            <person name="Adelman J.P."/>
            <person name="Fernald R.D."/>
        </authorList>
    </citation>
    <scope>NUCLEOTIDE SEQUENCE [MRNA]</scope>
    <source>
        <tissue>Hypothalamus</tissue>
    </source>
</reference>
<feature type="signal peptide" evidence="1">
    <location>
        <begin position="1"/>
        <end position="23"/>
    </location>
</feature>
<feature type="chain" id="PRO_0000012416" description="Progonadoliberin-1">
    <location>
        <begin position="24"/>
        <end position="92"/>
    </location>
</feature>
<feature type="peptide" id="PRO_0000012417" description="Gonadoliberin-1">
    <location>
        <begin position="24"/>
        <end position="33"/>
    </location>
</feature>
<feature type="peptide" id="PRO_0000012418" description="GnRH-associated peptide 1">
    <location>
        <begin position="37"/>
        <end position="92"/>
    </location>
</feature>
<feature type="site" description="Appears to be essential for biological activity">
    <location>
        <position position="26"/>
    </location>
</feature>
<feature type="modified residue" description="Pyrrolidone carboxylic acid" evidence="2">
    <location>
        <position position="24"/>
    </location>
</feature>
<feature type="modified residue" description="Glycine amide" evidence="1">
    <location>
        <position position="33"/>
    </location>
</feature>
<protein>
    <recommendedName>
        <fullName>Progonadoliberin-1</fullName>
    </recommendedName>
    <alternativeName>
        <fullName>Progonadoliberin I</fullName>
    </alternativeName>
    <component>
        <recommendedName>
            <fullName>Gonadoliberin-1</fullName>
        </recommendedName>
        <alternativeName>
            <fullName>Gonadoliberin I</fullName>
        </alternativeName>
        <alternativeName>
            <fullName>Gonadotropin-releasing hormone I</fullName>
            <shortName>GnRH-I</shortName>
        </alternativeName>
        <alternativeName>
            <fullName>Luliberin I</fullName>
        </alternativeName>
        <alternativeName>
            <fullName>Luteinizing hormone-releasing hormone I</fullName>
            <shortName>LH-RH I</shortName>
        </alternativeName>
    </component>
    <component>
        <recommendedName>
            <fullName>GnRH-associated peptide 1</fullName>
        </recommendedName>
        <alternativeName>
            <fullName>GnRH-associated peptide I</fullName>
        </alternativeName>
    </component>
</protein>
<name>GON1_TUPBE</name>
<evidence type="ECO:0000250" key="1"/>
<evidence type="ECO:0000250" key="2">
    <source>
        <dbReference type="UniProtKB" id="P01148"/>
    </source>
</evidence>
<evidence type="ECO:0000305" key="3"/>
<dbReference type="EMBL" id="U63326">
    <property type="protein sequence ID" value="AAB16837.1"/>
    <property type="molecule type" value="mRNA"/>
</dbReference>
<dbReference type="SMR" id="Q95335"/>
<dbReference type="HOGENOM" id="CLU_2412553_0_0_1"/>
<dbReference type="TreeFam" id="TF330934"/>
<dbReference type="GO" id="GO:0005615">
    <property type="term" value="C:extracellular space"/>
    <property type="evidence" value="ECO:0000250"/>
    <property type="project" value="UniProtKB"/>
</dbReference>
<dbReference type="GO" id="GO:0005183">
    <property type="term" value="F:gonadotropin hormone-releasing hormone activity"/>
    <property type="evidence" value="ECO:0007669"/>
    <property type="project" value="InterPro"/>
</dbReference>
<dbReference type="GO" id="GO:0031530">
    <property type="term" value="F:gonadotropin-releasing hormone receptor binding"/>
    <property type="evidence" value="ECO:0007669"/>
    <property type="project" value="TreeGrafter"/>
</dbReference>
<dbReference type="InterPro" id="IPR002012">
    <property type="entry name" value="GnRH"/>
</dbReference>
<dbReference type="InterPro" id="IPR019792">
    <property type="entry name" value="Gonadoliberin"/>
</dbReference>
<dbReference type="InterPro" id="IPR004079">
    <property type="entry name" value="Gonadoliberin_I_precursor"/>
</dbReference>
<dbReference type="PANTHER" id="PTHR10522">
    <property type="entry name" value="GONADOLIBERIN"/>
    <property type="match status" value="1"/>
</dbReference>
<dbReference type="PANTHER" id="PTHR10522:SF0">
    <property type="entry name" value="PROGONADOLIBERIN-1"/>
    <property type="match status" value="1"/>
</dbReference>
<dbReference type="Pfam" id="PF00446">
    <property type="entry name" value="GnRH"/>
    <property type="match status" value="1"/>
</dbReference>
<dbReference type="PRINTS" id="PR01541">
    <property type="entry name" value="GONADOLIBRNI"/>
</dbReference>
<dbReference type="PROSITE" id="PS00473">
    <property type="entry name" value="GNRH"/>
    <property type="match status" value="1"/>
</dbReference>